<sequence length="299" mass="32382">MMENSTTEARNEATMHLDEMTVEEALITMNKEDQQVPLAVRKAIPQLTKVIKKTIAQYKKGGRLIYIGAGTSGRLGVLDAAECVPTFNTDPHEIIGIIAGGQHAMTMAVEGAEDHKKLAEEDLKNIDLTSKDVVIGIAASGKTPYVIGGLTFANTIGATTVSISCNEHAVISEIAQYPVEVKVGPEVLTGSTRLKSGTAQKLILNMISTITMVGVGKVYDNLMIDVKATNQKLIDRSVRIIQEICAITYDEAMALYQVSEHDVKVATVMGMCGISKEEATRRLLNNGDIVKRAIRDRQP</sequence>
<name>MURQ_STAAR</name>
<proteinExistence type="inferred from homology"/>
<keyword id="KW-0119">Carbohydrate metabolism</keyword>
<keyword id="KW-0456">Lyase</keyword>
<gene>
    <name evidence="1" type="primary">murQ</name>
    <name type="ordered locus">SAR0192</name>
</gene>
<reference key="1">
    <citation type="journal article" date="2004" name="Proc. Natl. Acad. Sci. U.S.A.">
        <title>Complete genomes of two clinical Staphylococcus aureus strains: evidence for the rapid evolution of virulence and drug resistance.</title>
        <authorList>
            <person name="Holden M.T.G."/>
            <person name="Feil E.J."/>
            <person name="Lindsay J.A."/>
            <person name="Peacock S.J."/>
            <person name="Day N.P.J."/>
            <person name="Enright M.C."/>
            <person name="Foster T.J."/>
            <person name="Moore C.E."/>
            <person name="Hurst L."/>
            <person name="Atkin R."/>
            <person name="Barron A."/>
            <person name="Bason N."/>
            <person name="Bentley S.D."/>
            <person name="Chillingworth C."/>
            <person name="Chillingworth T."/>
            <person name="Churcher C."/>
            <person name="Clark L."/>
            <person name="Corton C."/>
            <person name="Cronin A."/>
            <person name="Doggett J."/>
            <person name="Dowd L."/>
            <person name="Feltwell T."/>
            <person name="Hance Z."/>
            <person name="Harris B."/>
            <person name="Hauser H."/>
            <person name="Holroyd S."/>
            <person name="Jagels K."/>
            <person name="James K.D."/>
            <person name="Lennard N."/>
            <person name="Line A."/>
            <person name="Mayes R."/>
            <person name="Moule S."/>
            <person name="Mungall K."/>
            <person name="Ormond D."/>
            <person name="Quail M.A."/>
            <person name="Rabbinowitsch E."/>
            <person name="Rutherford K.M."/>
            <person name="Sanders M."/>
            <person name="Sharp S."/>
            <person name="Simmonds M."/>
            <person name="Stevens K."/>
            <person name="Whitehead S."/>
            <person name="Barrell B.G."/>
            <person name="Spratt B.G."/>
            <person name="Parkhill J."/>
        </authorList>
    </citation>
    <scope>NUCLEOTIDE SEQUENCE [LARGE SCALE GENOMIC DNA]</scope>
    <source>
        <strain>MRSA252</strain>
    </source>
</reference>
<comment type="function">
    <text evidence="1">Specifically catalyzes the cleavage of the D-lactyl ether substituent of MurNAc 6-phosphate, producing GlcNAc 6-phosphate and D-lactate.</text>
</comment>
<comment type="catalytic activity">
    <reaction evidence="1">
        <text>N-acetyl-D-muramate 6-phosphate + H2O = N-acetyl-D-glucosamine 6-phosphate + (R)-lactate</text>
        <dbReference type="Rhea" id="RHEA:26410"/>
        <dbReference type="ChEBI" id="CHEBI:15377"/>
        <dbReference type="ChEBI" id="CHEBI:16004"/>
        <dbReference type="ChEBI" id="CHEBI:57513"/>
        <dbReference type="ChEBI" id="CHEBI:58722"/>
        <dbReference type="EC" id="4.2.1.126"/>
    </reaction>
</comment>
<comment type="pathway">
    <text evidence="1">Amino-sugar metabolism; N-acetylmuramate degradation.</text>
</comment>
<comment type="subunit">
    <text evidence="1">Homodimer.</text>
</comment>
<comment type="miscellaneous">
    <text evidence="1">A lyase-type mechanism (elimination/hydration) is suggested for the cleavage of the lactyl ether bond of MurNAc 6-phosphate, with the formation of an alpha,beta-unsaturated aldehyde intermediate with (E)-stereochemistry, followed by the syn addition of water to give product.</text>
</comment>
<comment type="similarity">
    <text evidence="1">Belongs to the GCKR-like family. MurNAc-6-P etherase subfamily.</text>
</comment>
<protein>
    <recommendedName>
        <fullName evidence="1">N-acetylmuramic acid 6-phosphate etherase</fullName>
        <shortName evidence="1">MurNAc-6-P etherase</shortName>
        <ecNumber evidence="1">4.2.1.126</ecNumber>
    </recommendedName>
    <alternativeName>
        <fullName evidence="1">N-acetylmuramic acid 6-phosphate hydrolase</fullName>
    </alternativeName>
    <alternativeName>
        <fullName evidence="1">N-acetylmuramic acid 6-phosphate lyase</fullName>
    </alternativeName>
</protein>
<dbReference type="EC" id="4.2.1.126" evidence="1"/>
<dbReference type="EMBL" id="BX571856">
    <property type="protein sequence ID" value="CAG39219.1"/>
    <property type="molecule type" value="Genomic_DNA"/>
</dbReference>
<dbReference type="SMR" id="Q6GKB5"/>
<dbReference type="KEGG" id="sar:SAR0192"/>
<dbReference type="HOGENOM" id="CLU_049049_1_1_9"/>
<dbReference type="UniPathway" id="UPA00342"/>
<dbReference type="Proteomes" id="UP000000596">
    <property type="component" value="Chromosome"/>
</dbReference>
<dbReference type="GO" id="GO:0097367">
    <property type="term" value="F:carbohydrate derivative binding"/>
    <property type="evidence" value="ECO:0007669"/>
    <property type="project" value="InterPro"/>
</dbReference>
<dbReference type="GO" id="GO:0016835">
    <property type="term" value="F:carbon-oxygen lyase activity"/>
    <property type="evidence" value="ECO:0007669"/>
    <property type="project" value="UniProtKB-UniRule"/>
</dbReference>
<dbReference type="GO" id="GO:0016803">
    <property type="term" value="F:ether hydrolase activity"/>
    <property type="evidence" value="ECO:0007669"/>
    <property type="project" value="TreeGrafter"/>
</dbReference>
<dbReference type="GO" id="GO:0046348">
    <property type="term" value="P:amino sugar catabolic process"/>
    <property type="evidence" value="ECO:0007669"/>
    <property type="project" value="InterPro"/>
</dbReference>
<dbReference type="GO" id="GO:0097173">
    <property type="term" value="P:N-acetylmuramic acid catabolic process"/>
    <property type="evidence" value="ECO:0007669"/>
    <property type="project" value="UniProtKB-UniPathway"/>
</dbReference>
<dbReference type="GO" id="GO:0009254">
    <property type="term" value="P:peptidoglycan turnover"/>
    <property type="evidence" value="ECO:0007669"/>
    <property type="project" value="TreeGrafter"/>
</dbReference>
<dbReference type="CDD" id="cd05007">
    <property type="entry name" value="SIS_Etherase"/>
    <property type="match status" value="1"/>
</dbReference>
<dbReference type="FunFam" id="1.10.8.1080:FF:000001">
    <property type="entry name" value="N-acetylmuramic acid 6-phosphate etherase"/>
    <property type="match status" value="1"/>
</dbReference>
<dbReference type="FunFam" id="3.40.50.10490:FF:000014">
    <property type="entry name" value="N-acetylmuramic acid 6-phosphate etherase"/>
    <property type="match status" value="1"/>
</dbReference>
<dbReference type="Gene3D" id="1.10.8.1080">
    <property type="match status" value="1"/>
</dbReference>
<dbReference type="Gene3D" id="3.40.50.10490">
    <property type="entry name" value="Glucose-6-phosphate isomerase like protein, domain 1"/>
    <property type="match status" value="1"/>
</dbReference>
<dbReference type="HAMAP" id="MF_00068">
    <property type="entry name" value="MurQ"/>
    <property type="match status" value="1"/>
</dbReference>
<dbReference type="InterPro" id="IPR005488">
    <property type="entry name" value="Etherase_MurQ"/>
</dbReference>
<dbReference type="InterPro" id="IPR005486">
    <property type="entry name" value="Glucokinase_regulatory_CS"/>
</dbReference>
<dbReference type="InterPro" id="IPR040190">
    <property type="entry name" value="MURQ/GCKR"/>
</dbReference>
<dbReference type="InterPro" id="IPR000408">
    <property type="entry name" value="Reg_chr_condens"/>
</dbReference>
<dbReference type="InterPro" id="IPR001347">
    <property type="entry name" value="SIS_dom"/>
</dbReference>
<dbReference type="InterPro" id="IPR046348">
    <property type="entry name" value="SIS_dom_sf"/>
</dbReference>
<dbReference type="NCBIfam" id="TIGR00274">
    <property type="entry name" value="N-acetylmuramic acid 6-phosphate etherase"/>
    <property type="match status" value="1"/>
</dbReference>
<dbReference type="NCBIfam" id="NF003915">
    <property type="entry name" value="PRK05441.1"/>
    <property type="match status" value="1"/>
</dbReference>
<dbReference type="NCBIfam" id="NF009222">
    <property type="entry name" value="PRK12570.1"/>
    <property type="match status" value="1"/>
</dbReference>
<dbReference type="PANTHER" id="PTHR10088">
    <property type="entry name" value="GLUCOKINASE REGULATORY PROTEIN"/>
    <property type="match status" value="1"/>
</dbReference>
<dbReference type="PANTHER" id="PTHR10088:SF4">
    <property type="entry name" value="GLUCOKINASE REGULATORY PROTEIN"/>
    <property type="match status" value="1"/>
</dbReference>
<dbReference type="Pfam" id="PF22645">
    <property type="entry name" value="GKRP_SIS_N"/>
    <property type="match status" value="1"/>
</dbReference>
<dbReference type="SUPFAM" id="SSF53697">
    <property type="entry name" value="SIS domain"/>
    <property type="match status" value="1"/>
</dbReference>
<dbReference type="PROSITE" id="PS01272">
    <property type="entry name" value="GCKR"/>
    <property type="match status" value="1"/>
</dbReference>
<dbReference type="PROSITE" id="PS51464">
    <property type="entry name" value="SIS"/>
    <property type="match status" value="1"/>
</dbReference>
<accession>Q6GKB5</accession>
<evidence type="ECO:0000255" key="1">
    <source>
        <dbReference type="HAMAP-Rule" id="MF_00068"/>
    </source>
</evidence>
<feature type="chain" id="PRO_0000249655" description="N-acetylmuramic acid 6-phosphate etherase">
    <location>
        <begin position="1"/>
        <end position="299"/>
    </location>
</feature>
<feature type="domain" description="SIS" evidence="1">
    <location>
        <begin position="54"/>
        <end position="217"/>
    </location>
</feature>
<feature type="active site" description="Proton donor" evidence="1">
    <location>
        <position position="82"/>
    </location>
</feature>
<feature type="active site" evidence="1">
    <location>
        <position position="113"/>
    </location>
</feature>
<organism>
    <name type="scientific">Staphylococcus aureus (strain MRSA252)</name>
    <dbReference type="NCBI Taxonomy" id="282458"/>
    <lineage>
        <taxon>Bacteria</taxon>
        <taxon>Bacillati</taxon>
        <taxon>Bacillota</taxon>
        <taxon>Bacilli</taxon>
        <taxon>Bacillales</taxon>
        <taxon>Staphylococcaceae</taxon>
        <taxon>Staphylococcus</taxon>
    </lineage>
</organism>